<organism>
    <name type="scientific">Synechococcus sp. (strain CC9605)</name>
    <dbReference type="NCBI Taxonomy" id="110662"/>
    <lineage>
        <taxon>Bacteria</taxon>
        <taxon>Bacillati</taxon>
        <taxon>Cyanobacteriota</taxon>
        <taxon>Cyanophyceae</taxon>
        <taxon>Synechococcales</taxon>
        <taxon>Synechococcaceae</taxon>
        <taxon>Synechococcus</taxon>
    </lineage>
</organism>
<sequence>MRVSISWLKQLVQVNESVDDLSERLSMAGFEVDDVDDLSARAQGVVVGNVLEREKHPNADKLSVCKVDVGAQAPIQIVCGASNVRSGIHVPVAMVGATLPAVGLTIKAGELRGVASNGMICSLTELGLTEQSDGIAILDELDESLPPNGSPVAPLLGLDDTVLELAITANRPDGLSMVGIAREVAALTGGSLSLPELDLDPSTSPLTTELDGCFYTITRIEGVDGSKPSPTWLQQRLERGGVNSVNAVVDVTNLVMLEQGQPLHAFDADALEQLTGQPVDAKSFAVRSARDGEIFVGLDDQKRTLDSRVQVVTCHDRPVAVAGVMGSLESGVTASTRNIWLESALFAPPRVRHSARALGLRTDASSRFEKGLPVEMTLPCSARASALLSQEFSCSESGRWVGGSGPAEAGPVLLRRSALHQLLGPLDAADGPEDLDDTSIENCLTALGCQLSAHEQGWEVMAPPSRRQDLQREVDLIEEVARLVGFDRFGAHLPDPLEPGALTPRQQAERRLRQLFCATGLQEVTTLSLVPASEQEQRIAISNPLLADTSHLRTNLWEEHLQICVRNLKASQRGCSVFEIGNTYSGSPEAVSQKAVLAGVICGDRRLSTWATSGKPQAPDYFQARGVLTRVMEALQLELSDRRLTDDARLHPGRAATLVLEGRPLGCFGQLHPAMAEELDLPEATYLFELDLARLLDAATRSNRWTPSFKPYPTVPFSERDLAVIVDRSSAATDLIQAIRKAGKPLLEQVELVDRFEGEQLGDNKVSQAFRLRYRGKNETLTDDKIQPVHDKVRAALSKQFQAELRS</sequence>
<proteinExistence type="inferred from homology"/>
<evidence type="ECO:0000255" key="1">
    <source>
        <dbReference type="HAMAP-Rule" id="MF_00283"/>
    </source>
</evidence>
<keyword id="KW-0030">Aminoacyl-tRNA synthetase</keyword>
<keyword id="KW-0067">ATP-binding</keyword>
<keyword id="KW-0963">Cytoplasm</keyword>
<keyword id="KW-0436">Ligase</keyword>
<keyword id="KW-0460">Magnesium</keyword>
<keyword id="KW-0479">Metal-binding</keyword>
<keyword id="KW-0547">Nucleotide-binding</keyword>
<keyword id="KW-0648">Protein biosynthesis</keyword>
<keyword id="KW-0694">RNA-binding</keyword>
<keyword id="KW-0820">tRNA-binding</keyword>
<name>SYFB_SYNSC</name>
<reference key="1">
    <citation type="submission" date="2005-07" db="EMBL/GenBank/DDBJ databases">
        <title>Complete sequence of Synechococcus sp. CC9605.</title>
        <authorList>
            <consortium name="US DOE Joint Genome Institute"/>
            <person name="Copeland A."/>
            <person name="Lucas S."/>
            <person name="Lapidus A."/>
            <person name="Barry K."/>
            <person name="Detter J.C."/>
            <person name="Glavina T."/>
            <person name="Hammon N."/>
            <person name="Israni S."/>
            <person name="Pitluck S."/>
            <person name="Schmutz J."/>
            <person name="Martinez M."/>
            <person name="Larimer F."/>
            <person name="Land M."/>
            <person name="Kyrpides N."/>
            <person name="Ivanova N."/>
            <person name="Richardson P."/>
        </authorList>
    </citation>
    <scope>NUCLEOTIDE SEQUENCE [LARGE SCALE GENOMIC DNA]</scope>
    <source>
        <strain>CC9605</strain>
    </source>
</reference>
<gene>
    <name evidence="1" type="primary">pheT</name>
    <name type="ordered locus">Syncc9605_1339</name>
</gene>
<feature type="chain" id="PRO_0000232823" description="Phenylalanine--tRNA ligase beta subunit">
    <location>
        <begin position="1"/>
        <end position="807"/>
    </location>
</feature>
<feature type="domain" description="tRNA-binding" evidence="1">
    <location>
        <begin position="39"/>
        <end position="153"/>
    </location>
</feature>
<feature type="domain" description="B5" evidence="1">
    <location>
        <begin position="407"/>
        <end position="491"/>
    </location>
</feature>
<feature type="domain" description="FDX-ACB" evidence="1">
    <location>
        <begin position="713"/>
        <end position="806"/>
    </location>
</feature>
<feature type="binding site" evidence="1">
    <location>
        <position position="469"/>
    </location>
    <ligand>
        <name>Mg(2+)</name>
        <dbReference type="ChEBI" id="CHEBI:18420"/>
        <note>shared with alpha subunit</note>
    </ligand>
</feature>
<feature type="binding site" evidence="1">
    <location>
        <position position="475"/>
    </location>
    <ligand>
        <name>Mg(2+)</name>
        <dbReference type="ChEBI" id="CHEBI:18420"/>
        <note>shared with alpha subunit</note>
    </ligand>
</feature>
<feature type="binding site" evidence="1">
    <location>
        <position position="478"/>
    </location>
    <ligand>
        <name>Mg(2+)</name>
        <dbReference type="ChEBI" id="CHEBI:18420"/>
        <note>shared with alpha subunit</note>
    </ligand>
</feature>
<feature type="binding site" evidence="1">
    <location>
        <position position="479"/>
    </location>
    <ligand>
        <name>Mg(2+)</name>
        <dbReference type="ChEBI" id="CHEBI:18420"/>
        <note>shared with alpha subunit</note>
    </ligand>
</feature>
<accession>Q3AJY9</accession>
<comment type="catalytic activity">
    <reaction evidence="1">
        <text>tRNA(Phe) + L-phenylalanine + ATP = L-phenylalanyl-tRNA(Phe) + AMP + diphosphate + H(+)</text>
        <dbReference type="Rhea" id="RHEA:19413"/>
        <dbReference type="Rhea" id="RHEA-COMP:9668"/>
        <dbReference type="Rhea" id="RHEA-COMP:9699"/>
        <dbReference type="ChEBI" id="CHEBI:15378"/>
        <dbReference type="ChEBI" id="CHEBI:30616"/>
        <dbReference type="ChEBI" id="CHEBI:33019"/>
        <dbReference type="ChEBI" id="CHEBI:58095"/>
        <dbReference type="ChEBI" id="CHEBI:78442"/>
        <dbReference type="ChEBI" id="CHEBI:78531"/>
        <dbReference type="ChEBI" id="CHEBI:456215"/>
        <dbReference type="EC" id="6.1.1.20"/>
    </reaction>
</comment>
<comment type="cofactor">
    <cofactor evidence="1">
        <name>Mg(2+)</name>
        <dbReference type="ChEBI" id="CHEBI:18420"/>
    </cofactor>
    <text evidence="1">Binds 2 magnesium ions per tetramer.</text>
</comment>
<comment type="subunit">
    <text evidence="1">Tetramer of two alpha and two beta subunits.</text>
</comment>
<comment type="subcellular location">
    <subcellularLocation>
        <location evidence="1">Cytoplasm</location>
    </subcellularLocation>
</comment>
<comment type="similarity">
    <text evidence="1">Belongs to the phenylalanyl-tRNA synthetase beta subunit family. Type 1 subfamily.</text>
</comment>
<protein>
    <recommendedName>
        <fullName evidence="1">Phenylalanine--tRNA ligase beta subunit</fullName>
        <ecNumber evidence="1">6.1.1.20</ecNumber>
    </recommendedName>
    <alternativeName>
        <fullName evidence="1">Phenylalanyl-tRNA synthetase beta subunit</fullName>
        <shortName evidence="1">PheRS</shortName>
    </alternativeName>
</protein>
<dbReference type="EC" id="6.1.1.20" evidence="1"/>
<dbReference type="EMBL" id="CP000110">
    <property type="protein sequence ID" value="ABB35093.1"/>
    <property type="molecule type" value="Genomic_DNA"/>
</dbReference>
<dbReference type="RefSeq" id="WP_011364312.1">
    <property type="nucleotide sequence ID" value="NC_007516.1"/>
</dbReference>
<dbReference type="SMR" id="Q3AJY9"/>
<dbReference type="STRING" id="110662.Syncc9605_1339"/>
<dbReference type="KEGG" id="syd:Syncc9605_1339"/>
<dbReference type="eggNOG" id="COG0072">
    <property type="taxonomic scope" value="Bacteria"/>
</dbReference>
<dbReference type="HOGENOM" id="CLU_016891_0_0_3"/>
<dbReference type="OrthoDB" id="9805455at2"/>
<dbReference type="GO" id="GO:0009328">
    <property type="term" value="C:phenylalanine-tRNA ligase complex"/>
    <property type="evidence" value="ECO:0007669"/>
    <property type="project" value="TreeGrafter"/>
</dbReference>
<dbReference type="GO" id="GO:0005524">
    <property type="term" value="F:ATP binding"/>
    <property type="evidence" value="ECO:0007669"/>
    <property type="project" value="UniProtKB-UniRule"/>
</dbReference>
<dbReference type="GO" id="GO:0000287">
    <property type="term" value="F:magnesium ion binding"/>
    <property type="evidence" value="ECO:0007669"/>
    <property type="project" value="UniProtKB-UniRule"/>
</dbReference>
<dbReference type="GO" id="GO:0004826">
    <property type="term" value="F:phenylalanine-tRNA ligase activity"/>
    <property type="evidence" value="ECO:0007669"/>
    <property type="project" value="UniProtKB-UniRule"/>
</dbReference>
<dbReference type="GO" id="GO:0000049">
    <property type="term" value="F:tRNA binding"/>
    <property type="evidence" value="ECO:0007669"/>
    <property type="project" value="UniProtKB-KW"/>
</dbReference>
<dbReference type="GO" id="GO:0006432">
    <property type="term" value="P:phenylalanyl-tRNA aminoacylation"/>
    <property type="evidence" value="ECO:0007669"/>
    <property type="project" value="UniProtKB-UniRule"/>
</dbReference>
<dbReference type="CDD" id="cd00769">
    <property type="entry name" value="PheRS_beta_core"/>
    <property type="match status" value="1"/>
</dbReference>
<dbReference type="CDD" id="cd02796">
    <property type="entry name" value="tRNA_bind_bactPheRS"/>
    <property type="match status" value="1"/>
</dbReference>
<dbReference type="FunFam" id="2.40.50.140:FF:000045">
    <property type="entry name" value="Phenylalanine--tRNA ligase beta subunit"/>
    <property type="match status" value="1"/>
</dbReference>
<dbReference type="Gene3D" id="3.30.56.10">
    <property type="match status" value="2"/>
</dbReference>
<dbReference type="Gene3D" id="3.30.930.10">
    <property type="entry name" value="Bira Bifunctional Protein, Domain 2"/>
    <property type="match status" value="1"/>
</dbReference>
<dbReference type="Gene3D" id="3.30.70.380">
    <property type="entry name" value="Ferrodoxin-fold anticodon-binding domain"/>
    <property type="match status" value="1"/>
</dbReference>
<dbReference type="Gene3D" id="2.40.50.140">
    <property type="entry name" value="Nucleic acid-binding proteins"/>
    <property type="match status" value="1"/>
</dbReference>
<dbReference type="Gene3D" id="3.50.40.10">
    <property type="entry name" value="Phenylalanyl-trna Synthetase, Chain B, domain 3"/>
    <property type="match status" value="1"/>
</dbReference>
<dbReference type="HAMAP" id="MF_00283">
    <property type="entry name" value="Phe_tRNA_synth_beta1"/>
    <property type="match status" value="1"/>
</dbReference>
<dbReference type="InterPro" id="IPR045864">
    <property type="entry name" value="aa-tRNA-synth_II/BPL/LPL"/>
</dbReference>
<dbReference type="InterPro" id="IPR005146">
    <property type="entry name" value="B3/B4_tRNA-bd"/>
</dbReference>
<dbReference type="InterPro" id="IPR009061">
    <property type="entry name" value="DNA-bd_dom_put_sf"/>
</dbReference>
<dbReference type="InterPro" id="IPR005121">
    <property type="entry name" value="Fdx_antiC-bd"/>
</dbReference>
<dbReference type="InterPro" id="IPR036690">
    <property type="entry name" value="Fdx_antiC-bd_sf"/>
</dbReference>
<dbReference type="InterPro" id="IPR012340">
    <property type="entry name" value="NA-bd_OB-fold"/>
</dbReference>
<dbReference type="InterPro" id="IPR045060">
    <property type="entry name" value="Phe-tRNA-ligase_IIc_bsu"/>
</dbReference>
<dbReference type="InterPro" id="IPR004532">
    <property type="entry name" value="Phe-tRNA-ligase_IIc_bsu_bact"/>
</dbReference>
<dbReference type="InterPro" id="IPR020825">
    <property type="entry name" value="Phe-tRNA_synthase-like_B3/B4"/>
</dbReference>
<dbReference type="InterPro" id="IPR041616">
    <property type="entry name" value="PheRS_beta_core"/>
</dbReference>
<dbReference type="InterPro" id="IPR002547">
    <property type="entry name" value="tRNA-bd_dom"/>
</dbReference>
<dbReference type="InterPro" id="IPR033714">
    <property type="entry name" value="tRNA_bind_bactPheRS"/>
</dbReference>
<dbReference type="InterPro" id="IPR005147">
    <property type="entry name" value="tRNA_synthase_B5-dom"/>
</dbReference>
<dbReference type="NCBIfam" id="TIGR00472">
    <property type="entry name" value="pheT_bact"/>
    <property type="match status" value="1"/>
</dbReference>
<dbReference type="NCBIfam" id="NF045760">
    <property type="entry name" value="YtpR"/>
    <property type="match status" value="1"/>
</dbReference>
<dbReference type="PANTHER" id="PTHR10947:SF0">
    <property type="entry name" value="PHENYLALANINE--TRNA LIGASE BETA SUBUNIT"/>
    <property type="match status" value="1"/>
</dbReference>
<dbReference type="PANTHER" id="PTHR10947">
    <property type="entry name" value="PHENYLALANYL-TRNA SYNTHETASE BETA CHAIN AND LEUCINE-RICH REPEAT-CONTAINING PROTEIN 47"/>
    <property type="match status" value="1"/>
</dbReference>
<dbReference type="Pfam" id="PF03483">
    <property type="entry name" value="B3_4"/>
    <property type="match status" value="1"/>
</dbReference>
<dbReference type="Pfam" id="PF03484">
    <property type="entry name" value="B5"/>
    <property type="match status" value="1"/>
</dbReference>
<dbReference type="Pfam" id="PF03147">
    <property type="entry name" value="FDX-ACB"/>
    <property type="match status" value="1"/>
</dbReference>
<dbReference type="Pfam" id="PF01588">
    <property type="entry name" value="tRNA_bind"/>
    <property type="match status" value="1"/>
</dbReference>
<dbReference type="Pfam" id="PF17759">
    <property type="entry name" value="tRNA_synthFbeta"/>
    <property type="match status" value="1"/>
</dbReference>
<dbReference type="SMART" id="SM00873">
    <property type="entry name" value="B3_4"/>
    <property type="match status" value="1"/>
</dbReference>
<dbReference type="SMART" id="SM00874">
    <property type="entry name" value="B5"/>
    <property type="match status" value="1"/>
</dbReference>
<dbReference type="SMART" id="SM00896">
    <property type="entry name" value="FDX-ACB"/>
    <property type="match status" value="1"/>
</dbReference>
<dbReference type="SUPFAM" id="SSF54991">
    <property type="entry name" value="Anticodon-binding domain of PheRS"/>
    <property type="match status" value="1"/>
</dbReference>
<dbReference type="SUPFAM" id="SSF55681">
    <property type="entry name" value="Class II aaRS and biotin synthetases"/>
    <property type="match status" value="1"/>
</dbReference>
<dbReference type="SUPFAM" id="SSF50249">
    <property type="entry name" value="Nucleic acid-binding proteins"/>
    <property type="match status" value="1"/>
</dbReference>
<dbReference type="SUPFAM" id="SSF56037">
    <property type="entry name" value="PheT/TilS domain"/>
    <property type="match status" value="1"/>
</dbReference>
<dbReference type="SUPFAM" id="SSF46955">
    <property type="entry name" value="Putative DNA-binding domain"/>
    <property type="match status" value="1"/>
</dbReference>
<dbReference type="PROSITE" id="PS51483">
    <property type="entry name" value="B5"/>
    <property type="match status" value="1"/>
</dbReference>
<dbReference type="PROSITE" id="PS51447">
    <property type="entry name" value="FDX_ACB"/>
    <property type="match status" value="1"/>
</dbReference>
<dbReference type="PROSITE" id="PS50886">
    <property type="entry name" value="TRBD"/>
    <property type="match status" value="1"/>
</dbReference>